<organism>
    <name type="scientific">Caenorhabditis elegans</name>
    <dbReference type="NCBI Taxonomy" id="6239"/>
    <lineage>
        <taxon>Eukaryota</taxon>
        <taxon>Metazoa</taxon>
        <taxon>Ecdysozoa</taxon>
        <taxon>Nematoda</taxon>
        <taxon>Chromadorea</taxon>
        <taxon>Rhabditida</taxon>
        <taxon>Rhabditina</taxon>
        <taxon>Rhabditomorpha</taxon>
        <taxon>Rhabditoidea</taxon>
        <taxon>Rhabditidae</taxon>
        <taxon>Peloderinae</taxon>
        <taxon>Caenorhabditis</taxon>
    </lineage>
</organism>
<dbReference type="EMBL" id="FO080277">
    <property type="protein sequence ID" value="CCD62535.1"/>
    <property type="molecule type" value="Genomic_DNA"/>
</dbReference>
<dbReference type="PIR" id="S44918">
    <property type="entry name" value="S44918"/>
</dbReference>
<dbReference type="RefSeq" id="NP_498716.1">
    <property type="nucleotide sequence ID" value="NM_066315.2"/>
</dbReference>
<dbReference type="SMR" id="P34674"/>
<dbReference type="STRING" id="6239.ZK688.4.1"/>
<dbReference type="PaxDb" id="6239-ZK688.4"/>
<dbReference type="EnsemblMetazoa" id="ZK688.4.1">
    <property type="protein sequence ID" value="ZK688.4.1"/>
    <property type="gene ID" value="WBGene00022799"/>
</dbReference>
<dbReference type="GeneID" id="191406"/>
<dbReference type="KEGG" id="cel:CELE_ZK688.4"/>
<dbReference type="UCSC" id="ZK688.4">
    <property type="organism name" value="c. elegans"/>
</dbReference>
<dbReference type="AGR" id="WB:WBGene00022799"/>
<dbReference type="CTD" id="191406"/>
<dbReference type="WormBase" id="ZK688.4">
    <property type="protein sequence ID" value="CE00462"/>
    <property type="gene ID" value="WBGene00022799"/>
</dbReference>
<dbReference type="HOGENOM" id="CLU_2814739_0_0_1"/>
<dbReference type="InParanoid" id="P34674"/>
<dbReference type="PRO" id="PR:P34674"/>
<dbReference type="Proteomes" id="UP000001940">
    <property type="component" value="Chromosome III"/>
</dbReference>
<dbReference type="Bgee" id="WBGene00022799">
    <property type="expression patterns" value="Expressed in embryo and 3 other cell types or tissues"/>
</dbReference>
<sequence length="67" mass="7834">MHTLILFRTVHSVSNFYIFSSTILLTSAVILAIFFFFGDGFFREKYRREFSTNSKEKDGNKNLTTVE</sequence>
<accession>P34674</accession>
<name>YO24_CAEEL</name>
<keyword id="KW-1185">Reference proteome</keyword>
<proteinExistence type="predicted"/>
<reference key="1">
    <citation type="journal article" date="1994" name="Nature">
        <title>2.2 Mb of contiguous nucleotide sequence from chromosome III of C. elegans.</title>
        <authorList>
            <person name="Wilson R."/>
            <person name="Ainscough R."/>
            <person name="Anderson K."/>
            <person name="Baynes C."/>
            <person name="Berks M."/>
            <person name="Bonfield J."/>
            <person name="Burton J."/>
            <person name="Connell M."/>
            <person name="Copsey T."/>
            <person name="Cooper J."/>
            <person name="Coulson A."/>
            <person name="Craxton M."/>
            <person name="Dear S."/>
            <person name="Du Z."/>
            <person name="Durbin R."/>
            <person name="Favello A."/>
            <person name="Fraser A."/>
            <person name="Fulton L."/>
            <person name="Gardner A."/>
            <person name="Green P."/>
            <person name="Hawkins T."/>
            <person name="Hillier L."/>
            <person name="Jier M."/>
            <person name="Johnston L."/>
            <person name="Jones M."/>
            <person name="Kershaw J."/>
            <person name="Kirsten J."/>
            <person name="Laisster N."/>
            <person name="Latreille P."/>
            <person name="Lightning J."/>
            <person name="Lloyd C."/>
            <person name="Mortimore B."/>
            <person name="O'Callaghan M."/>
            <person name="Parsons J."/>
            <person name="Percy C."/>
            <person name="Rifken L."/>
            <person name="Roopra A."/>
            <person name="Saunders D."/>
            <person name="Shownkeen R."/>
            <person name="Sims M."/>
            <person name="Smaldon N."/>
            <person name="Smith A."/>
            <person name="Smith M."/>
            <person name="Sonnhammer E."/>
            <person name="Staden R."/>
            <person name="Sulston J."/>
            <person name="Thierry-Mieg J."/>
            <person name="Thomas K."/>
            <person name="Vaudin M."/>
            <person name="Vaughan K."/>
            <person name="Waterston R."/>
            <person name="Watson A."/>
            <person name="Weinstock L."/>
            <person name="Wilkinson-Sproat J."/>
            <person name="Wohldman P."/>
        </authorList>
    </citation>
    <scope>NUCLEOTIDE SEQUENCE [LARGE SCALE GENOMIC DNA]</scope>
    <source>
        <strain>Bristol N2</strain>
    </source>
</reference>
<reference key="2">
    <citation type="journal article" date="1998" name="Science">
        <title>Genome sequence of the nematode C. elegans: a platform for investigating biology.</title>
        <authorList>
            <consortium name="The C. elegans sequencing consortium"/>
        </authorList>
    </citation>
    <scope>NUCLEOTIDE SEQUENCE [LARGE SCALE GENOMIC DNA]</scope>
    <source>
        <strain>Bristol N2</strain>
    </source>
</reference>
<feature type="chain" id="PRO_0000065544" description="Uncharacterized protein ZK688.4">
    <location>
        <begin position="1"/>
        <end position="67"/>
    </location>
</feature>
<gene>
    <name type="ORF">ZK688.4</name>
</gene>
<protein>
    <recommendedName>
        <fullName>Uncharacterized protein ZK688.4</fullName>
    </recommendedName>
</protein>